<dbReference type="EMBL" id="U43890">
    <property type="protein sequence ID" value="AAC49396.1"/>
    <property type="molecule type" value="Genomic_DNA"/>
</dbReference>
<dbReference type="EMBL" id="Z49211">
    <property type="protein sequence ID" value="CAA89131.1"/>
    <property type="molecule type" value="Genomic_DNA"/>
</dbReference>
<dbReference type="EMBL" id="Z49213">
    <property type="protein sequence ID" value="CAA89143.1"/>
    <property type="molecule type" value="Genomic_DNA"/>
</dbReference>
<dbReference type="EMBL" id="AY558399">
    <property type="protein sequence ID" value="AAS56725.1"/>
    <property type="molecule type" value="Genomic_DNA"/>
</dbReference>
<dbReference type="EMBL" id="BK006946">
    <property type="protein sequence ID" value="DAA09926.1"/>
    <property type="molecule type" value="Genomic_DNA"/>
</dbReference>
<dbReference type="PIR" id="S54030">
    <property type="entry name" value="S54030"/>
</dbReference>
<dbReference type="RefSeq" id="NP_013741.1">
    <property type="nucleotide sequence ID" value="NM_001182524.1"/>
</dbReference>
<dbReference type="PDB" id="2V0P">
    <property type="method" value="X-ray"/>
    <property type="resolution" value="1.80 A"/>
    <property type="chains" value="A/B=1-234"/>
</dbReference>
<dbReference type="PDBsum" id="2V0P"/>
<dbReference type="SMR" id="Q04372"/>
<dbReference type="BioGRID" id="35200">
    <property type="interactions" value="392"/>
</dbReference>
<dbReference type="ComplexPortal" id="CPX-1380">
    <property type="entry name" value="TAP42-RRD2-PPH21 phosphatase complex"/>
</dbReference>
<dbReference type="ComplexPortal" id="CPX-1382">
    <property type="entry name" value="TAP42-RRD2-PPH22 phosphatase complex"/>
</dbReference>
<dbReference type="ComplexPortal" id="CPX-1863">
    <property type="entry name" value="TAP42-RRD1-SIT4 phosphatase complex"/>
</dbReference>
<dbReference type="DIP" id="DIP-6380N"/>
<dbReference type="FunCoup" id="Q04372">
    <property type="interactions" value="734"/>
</dbReference>
<dbReference type="IntAct" id="Q04372">
    <property type="interactions" value="11"/>
</dbReference>
<dbReference type="MINT" id="Q04372"/>
<dbReference type="STRING" id="4932.YMR028W"/>
<dbReference type="iPTMnet" id="Q04372"/>
<dbReference type="PaxDb" id="4932-YMR028W"/>
<dbReference type="PeptideAtlas" id="Q04372"/>
<dbReference type="EnsemblFungi" id="YMR028W_mRNA">
    <property type="protein sequence ID" value="YMR028W"/>
    <property type="gene ID" value="YMR028W"/>
</dbReference>
<dbReference type="GeneID" id="855043"/>
<dbReference type="KEGG" id="sce:YMR028W"/>
<dbReference type="AGR" id="SGD:S000004630"/>
<dbReference type="SGD" id="S000004630">
    <property type="gene designation" value="TAP42"/>
</dbReference>
<dbReference type="VEuPathDB" id="FungiDB:YMR028W"/>
<dbReference type="eggNOG" id="KOG2830">
    <property type="taxonomic scope" value="Eukaryota"/>
</dbReference>
<dbReference type="GeneTree" id="ENSGT00390000002414"/>
<dbReference type="HOGENOM" id="CLU_041824_2_2_1"/>
<dbReference type="InParanoid" id="Q04372"/>
<dbReference type="OMA" id="EYELCEA"/>
<dbReference type="OrthoDB" id="10261753at2759"/>
<dbReference type="BioCyc" id="YEAST:G3O-32733-MONOMER"/>
<dbReference type="BioGRID-ORCS" id="855043">
    <property type="hits" value="0 hits in 10 CRISPR screens"/>
</dbReference>
<dbReference type="EvolutionaryTrace" id="Q04372"/>
<dbReference type="PRO" id="PR:Q04372"/>
<dbReference type="Proteomes" id="UP000002311">
    <property type="component" value="Chromosome XIII"/>
</dbReference>
<dbReference type="RNAct" id="Q04372">
    <property type="molecule type" value="protein"/>
</dbReference>
<dbReference type="GO" id="GO:0005829">
    <property type="term" value="C:cytosol"/>
    <property type="evidence" value="ECO:0000314"/>
    <property type="project" value="SGD"/>
</dbReference>
<dbReference type="GO" id="GO:0000159">
    <property type="term" value="C:protein phosphatase type 2A complex"/>
    <property type="evidence" value="ECO:0000353"/>
    <property type="project" value="ComplexPortal"/>
</dbReference>
<dbReference type="GO" id="GO:0051721">
    <property type="term" value="F:protein phosphatase 2A binding"/>
    <property type="evidence" value="ECO:0000318"/>
    <property type="project" value="GO_Central"/>
</dbReference>
<dbReference type="GO" id="GO:0009968">
    <property type="term" value="P:negative regulation of signal transduction"/>
    <property type="evidence" value="ECO:0007669"/>
    <property type="project" value="UniProtKB-KW"/>
</dbReference>
<dbReference type="GO" id="GO:0045943">
    <property type="term" value="P:positive regulation of transcription by RNA polymerase I"/>
    <property type="evidence" value="ECO:0000315"/>
    <property type="project" value="SGD"/>
</dbReference>
<dbReference type="GO" id="GO:0035303">
    <property type="term" value="P:regulation of dephosphorylation"/>
    <property type="evidence" value="ECO:0000318"/>
    <property type="project" value="GO_Central"/>
</dbReference>
<dbReference type="GO" id="GO:1903432">
    <property type="term" value="P:regulation of TORC1 signaling"/>
    <property type="evidence" value="ECO:0000315"/>
    <property type="project" value="SGD"/>
</dbReference>
<dbReference type="GO" id="GO:0031929">
    <property type="term" value="P:TOR signaling"/>
    <property type="evidence" value="ECO:0000303"/>
    <property type="project" value="ComplexPortal"/>
</dbReference>
<dbReference type="Gene3D" id="1.25.40.540">
    <property type="entry name" value="TAP42-like family"/>
    <property type="match status" value="1"/>
</dbReference>
<dbReference type="InterPro" id="IPR038511">
    <property type="entry name" value="TAP42/TAP46-like_sf"/>
</dbReference>
<dbReference type="InterPro" id="IPR007304">
    <property type="entry name" value="TAP46-like"/>
</dbReference>
<dbReference type="PANTHER" id="PTHR10933">
    <property type="entry name" value="IMMUNOGLOBULIN-BINDING PROTEIN 1"/>
    <property type="match status" value="1"/>
</dbReference>
<dbReference type="PANTHER" id="PTHR10933:SF9">
    <property type="entry name" value="IMMUNOGLOBULIN-BINDING PROTEIN 1"/>
    <property type="match status" value="1"/>
</dbReference>
<dbReference type="Pfam" id="PF04177">
    <property type="entry name" value="TAP42"/>
    <property type="match status" value="1"/>
</dbReference>
<name>TAP42_YEAST</name>
<evidence type="ECO:0000256" key="1">
    <source>
        <dbReference type="SAM" id="MobiDB-lite"/>
    </source>
</evidence>
<evidence type="ECO:0000269" key="2">
    <source>
    </source>
</evidence>
<evidence type="ECO:0000269" key="3">
    <source>
    </source>
</evidence>
<evidence type="ECO:0000269" key="4">
    <source>
    </source>
</evidence>
<evidence type="ECO:0000269" key="5">
    <source>
    </source>
</evidence>
<evidence type="ECO:0000269" key="6">
    <source>
    </source>
</evidence>
<evidence type="ECO:0000269" key="7">
    <source>
    </source>
</evidence>
<evidence type="ECO:0000305" key="8"/>
<evidence type="ECO:0007829" key="9">
    <source>
        <dbReference type="PDB" id="2V0P"/>
    </source>
</evidence>
<feature type="chain" id="PRO_0000218623" description="Type 2A phosphatase-associated protein 42">
    <location>
        <begin position="1"/>
        <end position="366"/>
    </location>
</feature>
<feature type="region of interest" description="Disordered" evidence="1">
    <location>
        <begin position="318"/>
        <end position="366"/>
    </location>
</feature>
<feature type="compositionally biased region" description="Acidic residues" evidence="1">
    <location>
        <begin position="324"/>
        <end position="336"/>
    </location>
</feature>
<feature type="compositionally biased region" description="Basic and acidic residues" evidence="1">
    <location>
        <begin position="337"/>
        <end position="356"/>
    </location>
</feature>
<feature type="helix" evidence="9">
    <location>
        <begin position="4"/>
        <end position="18"/>
    </location>
</feature>
<feature type="helix" evidence="9">
    <location>
        <begin position="29"/>
        <end position="50"/>
    </location>
</feature>
<feature type="helix" evidence="9">
    <location>
        <begin position="62"/>
        <end position="64"/>
    </location>
</feature>
<feature type="helix" evidence="9">
    <location>
        <begin position="67"/>
        <end position="74"/>
    </location>
</feature>
<feature type="helix" evidence="9">
    <location>
        <begin position="75"/>
        <end position="83"/>
    </location>
</feature>
<feature type="helix" evidence="9">
    <location>
        <begin position="93"/>
        <end position="120"/>
    </location>
</feature>
<feature type="helix" evidence="9">
    <location>
        <begin position="126"/>
        <end position="133"/>
    </location>
</feature>
<feature type="helix" evidence="9">
    <location>
        <begin position="143"/>
        <end position="146"/>
    </location>
</feature>
<feature type="helix" evidence="9">
    <location>
        <begin position="156"/>
        <end position="186"/>
    </location>
</feature>
<feature type="helix" evidence="9">
    <location>
        <begin position="199"/>
        <end position="231"/>
    </location>
</feature>
<organism>
    <name type="scientific">Saccharomyces cerevisiae (strain ATCC 204508 / S288c)</name>
    <name type="common">Baker's yeast</name>
    <dbReference type="NCBI Taxonomy" id="559292"/>
    <lineage>
        <taxon>Eukaryota</taxon>
        <taxon>Fungi</taxon>
        <taxon>Dikarya</taxon>
        <taxon>Ascomycota</taxon>
        <taxon>Saccharomycotina</taxon>
        <taxon>Saccharomycetes</taxon>
        <taxon>Saccharomycetales</taxon>
        <taxon>Saccharomycetaceae</taxon>
        <taxon>Saccharomyces</taxon>
    </lineage>
</organism>
<sequence>MASVTEQFNDIISLYSTKLEHTSLRQDSPEYQGLLLSTIKKLLNLKTAIFDRLALFSTNETIDDVSTASIKFLAVDYYLGLLISRRQSNDSDVAQRQSMKLIYLKKSVESFINFLTLLQDYKLLDPLVGEKLGNFKDRYNPQLSELYAQPKNNKDLSGAQLKRKEKIELFQRNKEISTKLHCLELELKNNDEDHDHDELLRELYLMRLHHFSLDTINNIEQNLFECEMLSNFLKNSVHEVKSSGTQIRKESNDDDSTGFTDKLENINKPLIDKKGQVLRNFTLVDKRQQLQQKVRGYGQYGPTMSVEEFLDKEFEEGRVLQGGEEPEQAPDEENMDWQDRETYKAREWDEFKESHAKGSGNTMNRG</sequence>
<proteinExistence type="evidence at protein level"/>
<comment type="function">
    <text evidence="4 5 6 7">Involved in negative regulation of the TOR signaling pathway in response to type of available nitrogen source. Inhibitor of PP2A phosphatase SIT4, which results in inhibition of nuclear export of MSN2, due to lack of dephosphorylation by SIT4. Also required for rapamycin induced activation of expression of many nitrogen discrimination pathway (NDP) genes. In complex with PPH21, required for organization of the actin cytoskeletom during the cell cycle via a Rho GTPase-dependent mechanism.</text>
</comment>
<comment type="subunit">
    <text evidence="2 3 4 5 6">Associates with the PP2a (PPH21 and PPH22) and SIT4 protein phosphatase catalytic subunits. Interacts with PPG1, PPH3 and TIP41.</text>
</comment>
<comment type="interaction">
    <interactant intactId="EBI-18926">
        <id>Q04372</id>
    </interactant>
    <interactant intactId="EBI-12745">
        <id>P23594</id>
        <label>PPH21</label>
    </interactant>
    <organismsDiffer>false</organismsDiffer>
    <experiments>11</experiments>
</comment>
<comment type="interaction">
    <interactant intactId="EBI-18926">
        <id>Q04372</id>
    </interactant>
    <interactant intactId="EBI-12752">
        <id>P23595</id>
        <label>PPH22</label>
    </interactant>
    <organismsDiffer>false</organismsDiffer>
    <experiments>6</experiments>
</comment>
<comment type="interaction">
    <interactant intactId="EBI-18926">
        <id>Q04372</id>
    </interactant>
    <interactant intactId="EBI-13707">
        <id>P20604</id>
        <label>SIT4</label>
    </interactant>
    <organismsDiffer>false</organismsDiffer>
    <experiments>8</experiments>
</comment>
<comment type="interaction">
    <interactant intactId="EBI-18926">
        <id>Q04372</id>
    </interactant>
    <interactant intactId="EBI-19385">
        <id>P32600</id>
        <label>TOR2</label>
    </interactant>
    <organismsDiffer>false</organismsDiffer>
    <experiments>4</experiments>
</comment>
<comment type="PTM">
    <text evidence="2">Phosphorylated by TOR kinases. Dephosphorylated by CDC55, TPD3 and SIT4.</text>
</comment>
<comment type="similarity">
    <text evidence="8">Belongs to the IGBP1/TAP42 family.</text>
</comment>
<accession>Q04372</accession>
<accession>D6VZK2</accession>
<accession>Q05039</accession>
<protein>
    <recommendedName>
        <fullName>Type 2A phosphatase-associated protein 42</fullName>
    </recommendedName>
</protein>
<keyword id="KW-0002">3D-structure</keyword>
<keyword id="KW-0597">Phosphoprotein</keyword>
<keyword id="KW-1185">Reference proteome</keyword>
<keyword id="KW-0734">Signal transduction inhibitor</keyword>
<gene>
    <name type="primary">TAP42</name>
    <name type="ordered locus">YMR028W</name>
    <name type="ORF">YM9711.18</name>
    <name type="ORF">YM9973.01C</name>
</gene>
<reference key="1">
    <citation type="journal article" date="1996" name="Genes Dev.">
        <title>Nutrients, via the Tor proteins, stimulate the association of Tap42 with type 2A phosphatases.</title>
        <authorList>
            <person name="Di Como C.J."/>
            <person name="Arndt K.T."/>
        </authorList>
    </citation>
    <scope>NUCLEOTIDE SEQUENCE [GENOMIC DNA]</scope>
    <source>
        <strain>ATCC 204508 / S288c</strain>
    </source>
</reference>
<reference key="2">
    <citation type="journal article" date="1997" name="Nature">
        <title>The nucleotide sequence of Saccharomyces cerevisiae chromosome XIII.</title>
        <authorList>
            <person name="Bowman S."/>
            <person name="Churcher C.M."/>
            <person name="Badcock K."/>
            <person name="Brown D."/>
            <person name="Chillingworth T."/>
            <person name="Connor R."/>
            <person name="Dedman K."/>
            <person name="Devlin K."/>
            <person name="Gentles S."/>
            <person name="Hamlin N."/>
            <person name="Hunt S."/>
            <person name="Jagels K."/>
            <person name="Lye G."/>
            <person name="Moule S."/>
            <person name="Odell C."/>
            <person name="Pearson D."/>
            <person name="Rajandream M.A."/>
            <person name="Rice P."/>
            <person name="Skelton J."/>
            <person name="Walsh S.V."/>
            <person name="Whitehead S."/>
            <person name="Barrell B.G."/>
        </authorList>
    </citation>
    <scope>NUCLEOTIDE SEQUENCE [LARGE SCALE GENOMIC DNA]</scope>
    <source>
        <strain>ATCC 204508 / S288c</strain>
    </source>
</reference>
<reference key="3">
    <citation type="journal article" date="2014" name="G3 (Bethesda)">
        <title>The reference genome sequence of Saccharomyces cerevisiae: Then and now.</title>
        <authorList>
            <person name="Engel S.R."/>
            <person name="Dietrich F.S."/>
            <person name="Fisk D.G."/>
            <person name="Binkley G."/>
            <person name="Balakrishnan R."/>
            <person name="Costanzo M.C."/>
            <person name="Dwight S.S."/>
            <person name="Hitz B.C."/>
            <person name="Karra K."/>
            <person name="Nash R.S."/>
            <person name="Weng S."/>
            <person name="Wong E.D."/>
            <person name="Lloyd P."/>
            <person name="Skrzypek M.S."/>
            <person name="Miyasato S.R."/>
            <person name="Simison M."/>
            <person name="Cherry J.M."/>
        </authorList>
    </citation>
    <scope>GENOME REANNOTATION</scope>
    <source>
        <strain>ATCC 204508 / S288c</strain>
    </source>
</reference>
<reference key="4">
    <citation type="journal article" date="2007" name="Genome Res.">
        <title>Approaching a complete repository of sequence-verified protein-encoding clones for Saccharomyces cerevisiae.</title>
        <authorList>
            <person name="Hu Y."/>
            <person name="Rolfs A."/>
            <person name="Bhullar B."/>
            <person name="Murthy T.V.S."/>
            <person name="Zhu C."/>
            <person name="Berger M.F."/>
            <person name="Camargo A.A."/>
            <person name="Kelley F."/>
            <person name="McCarron S."/>
            <person name="Jepson D."/>
            <person name="Richardson A."/>
            <person name="Raphael J."/>
            <person name="Moreira D."/>
            <person name="Taycher E."/>
            <person name="Zuo D."/>
            <person name="Mohr S."/>
            <person name="Kane M.F."/>
            <person name="Williamson J."/>
            <person name="Simpson A.J.G."/>
            <person name="Bulyk M.L."/>
            <person name="Harlow E."/>
            <person name="Marsischky G."/>
            <person name="Kolodner R.D."/>
            <person name="LaBaer J."/>
        </authorList>
    </citation>
    <scope>NUCLEOTIDE SEQUENCE [GENOMIC DNA]</scope>
    <source>
        <strain>ATCC 204508 / S288c</strain>
    </source>
</reference>
<reference key="5">
    <citation type="journal article" date="1999" name="EMBO J.">
        <title>Tor proteins and protein phosphatase 2A reciprocally regulate Tap42 in controlling cell growth in yeast.</title>
        <authorList>
            <person name="Jiang Y."/>
            <person name="Broach J.R."/>
        </authorList>
    </citation>
    <scope>INTERACTION WITH PPH21 AND PPH22</scope>
    <scope>PHOSPHORYLATION</scope>
    <scope>DEPHOSPHORYLATION</scope>
</reference>
<reference key="6">
    <citation type="journal article" date="2001" name="Mol. Cell">
        <title>TIP41 interacts with TAP42 and negatively regulates the TOR signaling pathway.</title>
        <authorList>
            <person name="Jacinto E."/>
            <person name="Guo B."/>
            <person name="Arndt K.T."/>
            <person name="Schmelzle T."/>
            <person name="Hall M.N."/>
        </authorList>
    </citation>
    <scope>INTERACTION WITH TIP41</scope>
</reference>
<reference key="7">
    <citation type="journal article" date="2003" name="Mol. Biol. Cell">
        <title>Interaction with Tap42 is required for the essential function of Sit4 and type 2A phosphatases.</title>
        <authorList>
            <person name="Wang H."/>
            <person name="Wang X."/>
            <person name="Jiang Y."/>
        </authorList>
    </citation>
    <scope>FUNCTION</scope>
    <scope>INTERACTION WITH PPG1; PPH21; PPH22; PPH3 AND SIT4</scope>
</reference>
<reference key="8">
    <citation type="journal article" date="2003" name="Mol. Cell">
        <title>Multiple roles of Tap42 in mediating rapamycin-induced transcriptional changes in yeast.</title>
        <authorList>
            <person name="Duevel K."/>
            <person name="Santhanam A."/>
            <person name="Garrett S."/>
            <person name="Schneper L."/>
            <person name="Broach J.R."/>
        </authorList>
    </citation>
    <scope>FUNCTION</scope>
    <scope>INTERACTION WITH SIT4</scope>
</reference>
<reference key="9">
    <citation type="journal article" date="2003" name="Mol. Cell. Biol.">
        <title>The Tap42-protein phosphatase type 2A catalytic subunit complex is required for cell cycle-dependent distribution of actin in yeast.</title>
        <authorList>
            <person name="Wang H."/>
            <person name="Jiang Y."/>
        </authorList>
    </citation>
    <scope>FUNCTION</scope>
    <scope>INTERACTION WITH PPH21 AND PPH22</scope>
</reference>
<reference key="10">
    <citation type="journal article" date="2004" name="Eukaryot. Cell">
        <title>PP2A phosphatase activity is required for stress and Tor kinase regulation of yeast stress response factor Msn2p.</title>
        <authorList>
            <person name="Santhanam A."/>
            <person name="Hartley A."/>
            <person name="Duevel K."/>
            <person name="Broach J.R."/>
            <person name="Garrett S."/>
        </authorList>
    </citation>
    <scope>FUNCTION</scope>
</reference>